<gene>
    <name evidence="1" type="primary">mnmA</name>
    <name type="synonym">trmU</name>
    <name type="ordered locus">CD630_12810</name>
</gene>
<organism>
    <name type="scientific">Clostridioides difficile (strain 630)</name>
    <name type="common">Peptoclostridium difficile</name>
    <dbReference type="NCBI Taxonomy" id="272563"/>
    <lineage>
        <taxon>Bacteria</taxon>
        <taxon>Bacillati</taxon>
        <taxon>Bacillota</taxon>
        <taxon>Clostridia</taxon>
        <taxon>Peptostreptococcales</taxon>
        <taxon>Peptostreptococcaceae</taxon>
        <taxon>Clostridioides</taxon>
    </lineage>
</organism>
<proteinExistence type="inferred from homology"/>
<keyword id="KW-0067">ATP-binding</keyword>
<keyword id="KW-0963">Cytoplasm</keyword>
<keyword id="KW-1015">Disulfide bond</keyword>
<keyword id="KW-0547">Nucleotide-binding</keyword>
<keyword id="KW-1185">Reference proteome</keyword>
<keyword id="KW-0694">RNA-binding</keyword>
<keyword id="KW-0808">Transferase</keyword>
<keyword id="KW-0819">tRNA processing</keyword>
<keyword id="KW-0820">tRNA-binding</keyword>
<reference key="1">
    <citation type="journal article" date="2006" name="Nat. Genet.">
        <title>The multidrug-resistant human pathogen Clostridium difficile has a highly mobile, mosaic genome.</title>
        <authorList>
            <person name="Sebaihia M."/>
            <person name="Wren B.W."/>
            <person name="Mullany P."/>
            <person name="Fairweather N.F."/>
            <person name="Minton N."/>
            <person name="Stabler R."/>
            <person name="Thomson N.R."/>
            <person name="Roberts A.P."/>
            <person name="Cerdeno-Tarraga A.M."/>
            <person name="Wang H."/>
            <person name="Holden M.T.G."/>
            <person name="Wright A."/>
            <person name="Churcher C."/>
            <person name="Quail M.A."/>
            <person name="Baker S."/>
            <person name="Bason N."/>
            <person name="Brooks K."/>
            <person name="Chillingworth T."/>
            <person name="Cronin A."/>
            <person name="Davis P."/>
            <person name="Dowd L."/>
            <person name="Fraser A."/>
            <person name="Feltwell T."/>
            <person name="Hance Z."/>
            <person name="Holroyd S."/>
            <person name="Jagels K."/>
            <person name="Moule S."/>
            <person name="Mungall K."/>
            <person name="Price C."/>
            <person name="Rabbinowitsch E."/>
            <person name="Sharp S."/>
            <person name="Simmonds M."/>
            <person name="Stevens K."/>
            <person name="Unwin L."/>
            <person name="Whithead S."/>
            <person name="Dupuy B."/>
            <person name="Dougan G."/>
            <person name="Barrell B."/>
            <person name="Parkhill J."/>
        </authorList>
    </citation>
    <scope>NUCLEOTIDE SEQUENCE [LARGE SCALE GENOMIC DNA]</scope>
    <source>
        <strain>630</strain>
    </source>
</reference>
<sequence length="361" mass="40848">MFMNKKVMIGMSGGVDSSVAAYLLKQQGYDVIGVTMKLWQDDDVVEIEGGCCSLSAVEDARRVANKIGIPFYVLNFREVFKEKVIDYFIDEYLEGKTPNPCIACNKHIKFDDFYKKARQIGCDYVATGHYAKIEKDESTGRYLLKKSVTDKKDQTYALYNLTQEQLEHTLLPIGDYEKDRVREIAKEMGMAVHNKPDSQEICFVKDNDYANYVKKHSKKRIEEGFFVDTKGNILGKHKGILYYTIGQRKGLGITFGKPMFVIDINPINNTIVLGDNEDLFKKELIAKDVNFISIDTLEEPLRVQAKIRYSAKPSPATIHRVGEDTIKIVFDEAQRAITKGQSVVMYDGDIVVGGGIIEKSL</sequence>
<dbReference type="EC" id="2.8.1.13" evidence="1"/>
<dbReference type="EMBL" id="AM180355">
    <property type="protein sequence ID" value="CAJ68137.1"/>
    <property type="molecule type" value="Genomic_DNA"/>
</dbReference>
<dbReference type="RefSeq" id="YP_001087775.1">
    <property type="nucleotide sequence ID" value="NC_009089.1"/>
</dbReference>
<dbReference type="SMR" id="Q18BE2"/>
<dbReference type="STRING" id="272563.CD630_12810"/>
<dbReference type="EnsemblBacteria" id="CAJ68137">
    <property type="protein sequence ID" value="CAJ68137"/>
    <property type="gene ID" value="CD630_12810"/>
</dbReference>
<dbReference type="KEGG" id="cdf:CD630_12810"/>
<dbReference type="PATRIC" id="fig|272563.8.peg.1346"/>
<dbReference type="eggNOG" id="COG0482">
    <property type="taxonomic scope" value="Bacteria"/>
</dbReference>
<dbReference type="OrthoDB" id="9800696at2"/>
<dbReference type="PhylomeDB" id="Q18BE2"/>
<dbReference type="BioCyc" id="PDIF272563:G12WB-1415-MONOMER"/>
<dbReference type="Proteomes" id="UP000001978">
    <property type="component" value="Chromosome"/>
</dbReference>
<dbReference type="GO" id="GO:0005737">
    <property type="term" value="C:cytoplasm"/>
    <property type="evidence" value="ECO:0007669"/>
    <property type="project" value="UniProtKB-SubCell"/>
</dbReference>
<dbReference type="GO" id="GO:0005524">
    <property type="term" value="F:ATP binding"/>
    <property type="evidence" value="ECO:0007669"/>
    <property type="project" value="UniProtKB-KW"/>
</dbReference>
<dbReference type="GO" id="GO:0000049">
    <property type="term" value="F:tRNA binding"/>
    <property type="evidence" value="ECO:0007669"/>
    <property type="project" value="UniProtKB-KW"/>
</dbReference>
<dbReference type="GO" id="GO:0103016">
    <property type="term" value="F:tRNA-uridine 2-sulfurtransferase activity"/>
    <property type="evidence" value="ECO:0007669"/>
    <property type="project" value="UniProtKB-EC"/>
</dbReference>
<dbReference type="GO" id="GO:0002143">
    <property type="term" value="P:tRNA wobble position uridine thiolation"/>
    <property type="evidence" value="ECO:0007669"/>
    <property type="project" value="TreeGrafter"/>
</dbReference>
<dbReference type="CDD" id="cd01998">
    <property type="entry name" value="MnmA_TRMU-like"/>
    <property type="match status" value="1"/>
</dbReference>
<dbReference type="FunFam" id="2.30.30.280:FF:000001">
    <property type="entry name" value="tRNA-specific 2-thiouridylase MnmA"/>
    <property type="match status" value="1"/>
</dbReference>
<dbReference type="FunFam" id="2.40.30.10:FF:000023">
    <property type="entry name" value="tRNA-specific 2-thiouridylase MnmA"/>
    <property type="match status" value="1"/>
</dbReference>
<dbReference type="FunFam" id="3.40.50.620:FF:000115">
    <property type="entry name" value="tRNA-specific 2-thiouridylase MnmA"/>
    <property type="match status" value="1"/>
</dbReference>
<dbReference type="Gene3D" id="2.30.30.280">
    <property type="entry name" value="Adenine nucleotide alpha hydrolases-like domains"/>
    <property type="match status" value="1"/>
</dbReference>
<dbReference type="Gene3D" id="3.40.50.620">
    <property type="entry name" value="HUPs"/>
    <property type="match status" value="1"/>
</dbReference>
<dbReference type="Gene3D" id="2.40.30.10">
    <property type="entry name" value="Translation factors"/>
    <property type="match status" value="1"/>
</dbReference>
<dbReference type="HAMAP" id="MF_00144">
    <property type="entry name" value="tRNA_thiouridyl_MnmA"/>
    <property type="match status" value="1"/>
</dbReference>
<dbReference type="InterPro" id="IPR004506">
    <property type="entry name" value="MnmA-like"/>
</dbReference>
<dbReference type="InterPro" id="IPR046885">
    <property type="entry name" value="MnmA-like_C"/>
</dbReference>
<dbReference type="InterPro" id="IPR046884">
    <property type="entry name" value="MnmA-like_central"/>
</dbReference>
<dbReference type="InterPro" id="IPR023382">
    <property type="entry name" value="MnmA-like_central_sf"/>
</dbReference>
<dbReference type="InterPro" id="IPR014729">
    <property type="entry name" value="Rossmann-like_a/b/a_fold"/>
</dbReference>
<dbReference type="NCBIfam" id="NF001138">
    <property type="entry name" value="PRK00143.1"/>
    <property type="match status" value="1"/>
</dbReference>
<dbReference type="NCBIfam" id="TIGR00420">
    <property type="entry name" value="trmU"/>
    <property type="match status" value="1"/>
</dbReference>
<dbReference type="PANTHER" id="PTHR11933:SF5">
    <property type="entry name" value="MITOCHONDRIAL TRNA-SPECIFIC 2-THIOURIDYLASE 1"/>
    <property type="match status" value="1"/>
</dbReference>
<dbReference type="PANTHER" id="PTHR11933">
    <property type="entry name" value="TRNA 5-METHYLAMINOMETHYL-2-THIOURIDYLATE -METHYLTRANSFERASE"/>
    <property type="match status" value="1"/>
</dbReference>
<dbReference type="Pfam" id="PF03054">
    <property type="entry name" value="tRNA_Me_trans"/>
    <property type="match status" value="1"/>
</dbReference>
<dbReference type="Pfam" id="PF20258">
    <property type="entry name" value="tRNA_Me_trans_C"/>
    <property type="match status" value="1"/>
</dbReference>
<dbReference type="Pfam" id="PF20259">
    <property type="entry name" value="tRNA_Me_trans_M"/>
    <property type="match status" value="1"/>
</dbReference>
<dbReference type="SUPFAM" id="SSF52402">
    <property type="entry name" value="Adenine nucleotide alpha hydrolases-like"/>
    <property type="match status" value="1"/>
</dbReference>
<evidence type="ECO:0000255" key="1">
    <source>
        <dbReference type="HAMAP-Rule" id="MF_00144"/>
    </source>
</evidence>
<accession>Q18BE2</accession>
<protein>
    <recommendedName>
        <fullName evidence="1">tRNA-specific 2-thiouridylase MnmA</fullName>
        <ecNumber evidence="1">2.8.1.13</ecNumber>
    </recommendedName>
</protein>
<feature type="chain" id="PRO_1000009518" description="tRNA-specific 2-thiouridylase MnmA">
    <location>
        <begin position="1"/>
        <end position="361"/>
    </location>
</feature>
<feature type="region of interest" description="Interaction with tRNA" evidence="1">
    <location>
        <begin position="152"/>
        <end position="154"/>
    </location>
</feature>
<feature type="region of interest" description="Interaction with tRNA" evidence="1">
    <location>
        <begin position="308"/>
        <end position="309"/>
    </location>
</feature>
<feature type="active site" description="Nucleophile" evidence="1">
    <location>
        <position position="104"/>
    </location>
</feature>
<feature type="active site" description="Cysteine persulfide intermediate" evidence="1">
    <location>
        <position position="202"/>
    </location>
</feature>
<feature type="binding site" evidence="1">
    <location>
        <begin position="10"/>
        <end position="17"/>
    </location>
    <ligand>
        <name>ATP</name>
        <dbReference type="ChEBI" id="CHEBI:30616"/>
    </ligand>
</feature>
<feature type="binding site" evidence="1">
    <location>
        <position position="36"/>
    </location>
    <ligand>
        <name>ATP</name>
        <dbReference type="ChEBI" id="CHEBI:30616"/>
    </ligand>
</feature>
<feature type="binding site" evidence="1">
    <location>
        <position position="128"/>
    </location>
    <ligand>
        <name>ATP</name>
        <dbReference type="ChEBI" id="CHEBI:30616"/>
    </ligand>
</feature>
<feature type="site" description="Interaction with tRNA" evidence="1">
    <location>
        <position position="129"/>
    </location>
</feature>
<feature type="site" description="Interaction with tRNA" evidence="1">
    <location>
        <position position="341"/>
    </location>
</feature>
<feature type="disulfide bond" description="Alternate" evidence="1">
    <location>
        <begin position="104"/>
        <end position="202"/>
    </location>
</feature>
<name>MNMA_CLOD6</name>
<comment type="function">
    <text evidence="1">Catalyzes the 2-thiolation of uridine at the wobble position (U34) of tRNA, leading to the formation of s(2)U34.</text>
</comment>
<comment type="catalytic activity">
    <reaction evidence="1">
        <text>S-sulfanyl-L-cysteinyl-[protein] + uridine(34) in tRNA + AH2 + ATP = 2-thiouridine(34) in tRNA + L-cysteinyl-[protein] + A + AMP + diphosphate + H(+)</text>
        <dbReference type="Rhea" id="RHEA:47032"/>
        <dbReference type="Rhea" id="RHEA-COMP:10131"/>
        <dbReference type="Rhea" id="RHEA-COMP:11726"/>
        <dbReference type="Rhea" id="RHEA-COMP:11727"/>
        <dbReference type="Rhea" id="RHEA-COMP:11728"/>
        <dbReference type="ChEBI" id="CHEBI:13193"/>
        <dbReference type="ChEBI" id="CHEBI:15378"/>
        <dbReference type="ChEBI" id="CHEBI:17499"/>
        <dbReference type="ChEBI" id="CHEBI:29950"/>
        <dbReference type="ChEBI" id="CHEBI:30616"/>
        <dbReference type="ChEBI" id="CHEBI:33019"/>
        <dbReference type="ChEBI" id="CHEBI:61963"/>
        <dbReference type="ChEBI" id="CHEBI:65315"/>
        <dbReference type="ChEBI" id="CHEBI:87170"/>
        <dbReference type="ChEBI" id="CHEBI:456215"/>
        <dbReference type="EC" id="2.8.1.13"/>
    </reaction>
</comment>
<comment type="subcellular location">
    <subcellularLocation>
        <location evidence="1">Cytoplasm</location>
    </subcellularLocation>
</comment>
<comment type="similarity">
    <text evidence="1">Belongs to the MnmA/TRMU family.</text>
</comment>